<reference key="1">
    <citation type="journal article" date="2001" name="Science">
        <title>The genome of the natural genetic engineer Agrobacterium tumefaciens C58.</title>
        <authorList>
            <person name="Wood D.W."/>
            <person name="Setubal J.C."/>
            <person name="Kaul R."/>
            <person name="Monks D.E."/>
            <person name="Kitajima J.P."/>
            <person name="Okura V.K."/>
            <person name="Zhou Y."/>
            <person name="Chen L."/>
            <person name="Wood G.E."/>
            <person name="Almeida N.F. Jr."/>
            <person name="Woo L."/>
            <person name="Chen Y."/>
            <person name="Paulsen I.T."/>
            <person name="Eisen J.A."/>
            <person name="Karp P.D."/>
            <person name="Bovee D. Sr."/>
            <person name="Chapman P."/>
            <person name="Clendenning J."/>
            <person name="Deatherage G."/>
            <person name="Gillet W."/>
            <person name="Grant C."/>
            <person name="Kutyavin T."/>
            <person name="Levy R."/>
            <person name="Li M.-J."/>
            <person name="McClelland E."/>
            <person name="Palmieri A."/>
            <person name="Raymond C."/>
            <person name="Rouse G."/>
            <person name="Saenphimmachak C."/>
            <person name="Wu Z."/>
            <person name="Romero P."/>
            <person name="Gordon D."/>
            <person name="Zhang S."/>
            <person name="Yoo H."/>
            <person name="Tao Y."/>
            <person name="Biddle P."/>
            <person name="Jung M."/>
            <person name="Krespan W."/>
            <person name="Perry M."/>
            <person name="Gordon-Kamm B."/>
            <person name="Liao L."/>
            <person name="Kim S."/>
            <person name="Hendrick C."/>
            <person name="Zhao Z.-Y."/>
            <person name="Dolan M."/>
            <person name="Chumley F."/>
            <person name="Tingey S.V."/>
            <person name="Tomb J.-F."/>
            <person name="Gordon M.P."/>
            <person name="Olson M.V."/>
            <person name="Nester E.W."/>
        </authorList>
    </citation>
    <scope>NUCLEOTIDE SEQUENCE [LARGE SCALE GENOMIC DNA]</scope>
    <source>
        <strain>C58 / ATCC 33970</strain>
    </source>
</reference>
<reference key="2">
    <citation type="journal article" date="2001" name="Science">
        <title>Genome sequence of the plant pathogen and biotechnology agent Agrobacterium tumefaciens C58.</title>
        <authorList>
            <person name="Goodner B."/>
            <person name="Hinkle G."/>
            <person name="Gattung S."/>
            <person name="Miller N."/>
            <person name="Blanchard M."/>
            <person name="Qurollo B."/>
            <person name="Goldman B.S."/>
            <person name="Cao Y."/>
            <person name="Askenazi M."/>
            <person name="Halling C."/>
            <person name="Mullin L."/>
            <person name="Houmiel K."/>
            <person name="Gordon J."/>
            <person name="Vaudin M."/>
            <person name="Iartchouk O."/>
            <person name="Epp A."/>
            <person name="Liu F."/>
            <person name="Wollam C."/>
            <person name="Allinger M."/>
            <person name="Doughty D."/>
            <person name="Scott C."/>
            <person name="Lappas C."/>
            <person name="Markelz B."/>
            <person name="Flanagan C."/>
            <person name="Crowell C."/>
            <person name="Gurson J."/>
            <person name="Lomo C."/>
            <person name="Sear C."/>
            <person name="Strub G."/>
            <person name="Cielo C."/>
            <person name="Slater S."/>
        </authorList>
    </citation>
    <scope>NUCLEOTIDE SEQUENCE [LARGE SCALE GENOMIC DNA]</scope>
    <source>
        <strain>C58 / ATCC 33970</strain>
    </source>
</reference>
<reference key="3">
    <citation type="journal article" date="2022" name="Nat. Commun.">
        <title>Peptidoglycan recycling mediated by an ABC transporter in the plant pathogen Agrobacterium tumefaciens.</title>
        <authorList>
            <person name="Gilmore M.C."/>
            <person name="Cava F."/>
        </authorList>
    </citation>
    <scope>FUNCTION</scope>
    <scope>DISRUPTION PHENOTYPE</scope>
    <source>
        <strain>C58 / ATCC 33970</strain>
    </source>
</reference>
<keyword id="KW-0571">Peptide transport</keyword>
<keyword id="KW-0574">Periplasm</keyword>
<keyword id="KW-0653">Protein transport</keyword>
<keyword id="KW-1185">Reference proteome</keyword>
<keyword id="KW-0732">Signal</keyword>
<keyword id="KW-0813">Transport</keyword>
<gene>
    <name evidence="3" type="primary">yejA</name>
    <name evidence="6" type="ordered locus">Atu0187</name>
</gene>
<sequence length="614" mass="68551">MILAPLKSRILIALAASALLIPAVASAQSTDVWRKGISTVGELKHPDGFDHFDYVNTKAPKGGTLRLSTSGTFDTLNPLLAKGERATGLSLVYDTLMKSTEEELSASYGLLAEGVSYPDDIEKATFRLRQDAKWADGKPVTPEDVVFSFEKAKDLSPQLATYYTHVTKAEVSGERDITFTFDEKNNRELPQIVGQLLIVPKHWWEGTGPDGKPRDISRGTLEPVMGSGPYKIAAVSPGSSVTYERRDDYWGKDVNVNVGMNNFKTIAYTFFADQDVEFQAFKSGTVDFRQEASSSRWVTGYDFPAVKEGRVKKEELPNIYRSVGIMQAFVPNMRREKFQNPKLRKALNYAFDFEELNRTLAYGQFQRITSFFMGSELASSGLPTGRELEILQELKDQVPPEVFTTEYRNPVAGDPAKQRDNLREAVKLMKEAGYELRGNRMVNAATGQQLDMEFLIDSSGMERTILPYVQNLKKIGINATIRTVDASQYTNRTRSFDFDVTIKLWATSANPGNEQADFWGSAAADRQGSNNLAGIKNPAVDALVRKVIFAPNRDEQVAAARALDRVLLANSYVIPQFYRGEMFIAYWNTLIRPENLPEYGVGFPDAWWSGKAGN</sequence>
<comment type="function">
    <text evidence="5">Probably part of the ABC transporter complex YejABEF, which is likely involved in broad-spectrum peptide import.</text>
</comment>
<comment type="subunit">
    <text evidence="5">The complex is composed of one ATP-binding protein (YejF), two transmembrane proteins (YejB and YejE) and a solute-binding protein (YejA).</text>
</comment>
<comment type="subcellular location">
    <subcellularLocation>
        <location evidence="5">Periplasm</location>
    </subcellularLocation>
</comment>
<comment type="disruption phenotype">
    <text evidence="2">Deletion of the gene does not affect sensitivity to ampicillin (PubMed:36566216). Mutant does not accumulate peptidoglycans fragments in the extracellular milieu (PubMed:36566216). Deletion of the yejABEF operon leads to the accumulation of anhydromuramyl tri-, tetra- and pentapeptides in large quantities in the extracellular milieu (PubMed:36566216). The yejABEF mutant, but not the single yejA mutant, displays cell swelling and lysis as well as a severe growth defect (PubMed:36566216).</text>
</comment>
<comment type="miscellaneous">
    <text evidence="2">YejA is part of the yejABEF operon, but it has been shown that YepA (Atu1774), instead of YejA, is the binding protein involved in peptidoglycan recycling in A.tumefaciens with YejB, YejE and YejF.</text>
</comment>
<comment type="similarity">
    <text evidence="4">Belongs to the bacterial solute-binding protein 5 family.</text>
</comment>
<evidence type="ECO:0000255" key="1"/>
<evidence type="ECO:0000269" key="2">
    <source>
    </source>
</evidence>
<evidence type="ECO:0000303" key="3">
    <source>
    </source>
</evidence>
<evidence type="ECO:0000305" key="4"/>
<evidence type="ECO:0000305" key="5">
    <source>
    </source>
</evidence>
<evidence type="ECO:0000312" key="6">
    <source>
        <dbReference type="EMBL" id="AAK86007.1"/>
    </source>
</evidence>
<accession>A9CKL4</accession>
<organism>
    <name type="scientific">Agrobacterium fabrum (strain C58 / ATCC 33970)</name>
    <name type="common">Agrobacterium tumefaciens (strain C58)</name>
    <dbReference type="NCBI Taxonomy" id="176299"/>
    <lineage>
        <taxon>Bacteria</taxon>
        <taxon>Pseudomonadati</taxon>
        <taxon>Pseudomonadota</taxon>
        <taxon>Alphaproteobacteria</taxon>
        <taxon>Hyphomicrobiales</taxon>
        <taxon>Rhizobiaceae</taxon>
        <taxon>Rhizobium/Agrobacterium group</taxon>
        <taxon>Agrobacterium</taxon>
        <taxon>Agrobacterium tumefaciens complex</taxon>
    </lineage>
</organism>
<name>YEJA_AGRFC</name>
<feature type="signal peptide" evidence="1">
    <location>
        <begin position="1"/>
        <end position="27"/>
    </location>
</feature>
<feature type="chain" id="PRO_5002733429" description="Probable peptide-binding protein YejA">
    <location>
        <begin position="28"/>
        <end position="614"/>
    </location>
</feature>
<protein>
    <recommendedName>
        <fullName evidence="4">Probable peptide-binding protein YejA</fullName>
    </recommendedName>
</protein>
<dbReference type="EMBL" id="AE007869">
    <property type="protein sequence ID" value="AAK86007.1"/>
    <property type="molecule type" value="Genomic_DNA"/>
</dbReference>
<dbReference type="PIR" id="AE2599">
    <property type="entry name" value="AE2599"/>
</dbReference>
<dbReference type="PIR" id="F97381">
    <property type="entry name" value="F97381"/>
</dbReference>
<dbReference type="RefSeq" id="NP_353222.1">
    <property type="nucleotide sequence ID" value="NC_003062.2"/>
</dbReference>
<dbReference type="RefSeq" id="WP_010970712.1">
    <property type="nucleotide sequence ID" value="NC_003062.2"/>
</dbReference>
<dbReference type="SMR" id="A9CKL4"/>
<dbReference type="STRING" id="176299.Atu0187"/>
<dbReference type="EnsemblBacteria" id="AAK86007">
    <property type="protein sequence ID" value="AAK86007"/>
    <property type="gene ID" value="Atu0187"/>
</dbReference>
<dbReference type="GeneID" id="1132225"/>
<dbReference type="KEGG" id="atu:Atu0187"/>
<dbReference type="PATRIC" id="fig|176299.10.peg.178"/>
<dbReference type="eggNOG" id="COG4166">
    <property type="taxonomic scope" value="Bacteria"/>
</dbReference>
<dbReference type="HOGENOM" id="CLU_023171_0_0_5"/>
<dbReference type="OrthoDB" id="9803988at2"/>
<dbReference type="PhylomeDB" id="A9CKL4"/>
<dbReference type="BioCyc" id="AGRO:ATU0187-MONOMER"/>
<dbReference type="Proteomes" id="UP000000813">
    <property type="component" value="Chromosome circular"/>
</dbReference>
<dbReference type="GO" id="GO:0043190">
    <property type="term" value="C:ATP-binding cassette (ABC) transporter complex"/>
    <property type="evidence" value="ECO:0007669"/>
    <property type="project" value="InterPro"/>
</dbReference>
<dbReference type="GO" id="GO:0030288">
    <property type="term" value="C:outer membrane-bounded periplasmic space"/>
    <property type="evidence" value="ECO:0007669"/>
    <property type="project" value="TreeGrafter"/>
</dbReference>
<dbReference type="GO" id="GO:1904680">
    <property type="term" value="F:peptide transmembrane transporter activity"/>
    <property type="evidence" value="ECO:0007669"/>
    <property type="project" value="TreeGrafter"/>
</dbReference>
<dbReference type="GO" id="GO:0042884">
    <property type="term" value="P:microcin transport"/>
    <property type="evidence" value="ECO:0007669"/>
    <property type="project" value="TreeGrafter"/>
</dbReference>
<dbReference type="GO" id="GO:0015833">
    <property type="term" value="P:peptide transport"/>
    <property type="evidence" value="ECO:0007669"/>
    <property type="project" value="UniProtKB-KW"/>
</dbReference>
<dbReference type="GO" id="GO:0015031">
    <property type="term" value="P:protein transport"/>
    <property type="evidence" value="ECO:0007669"/>
    <property type="project" value="UniProtKB-KW"/>
</dbReference>
<dbReference type="CDD" id="cd08497">
    <property type="entry name" value="MbnE-like"/>
    <property type="match status" value="1"/>
</dbReference>
<dbReference type="Gene3D" id="3.10.105.10">
    <property type="entry name" value="Dipeptide-binding Protein, Domain 3"/>
    <property type="match status" value="1"/>
</dbReference>
<dbReference type="Gene3D" id="3.40.190.10">
    <property type="entry name" value="Periplasmic binding protein-like II"/>
    <property type="match status" value="1"/>
</dbReference>
<dbReference type="InterPro" id="IPR030678">
    <property type="entry name" value="Peptide/Ni-bd"/>
</dbReference>
<dbReference type="InterPro" id="IPR039424">
    <property type="entry name" value="SBP_5"/>
</dbReference>
<dbReference type="InterPro" id="IPR000914">
    <property type="entry name" value="SBP_5_dom"/>
</dbReference>
<dbReference type="PANTHER" id="PTHR30290:SF64">
    <property type="entry name" value="ABC TRANSPORTER PERIPLASMIC BINDING PROTEIN"/>
    <property type="match status" value="1"/>
</dbReference>
<dbReference type="PANTHER" id="PTHR30290">
    <property type="entry name" value="PERIPLASMIC BINDING COMPONENT OF ABC TRANSPORTER"/>
    <property type="match status" value="1"/>
</dbReference>
<dbReference type="Pfam" id="PF00496">
    <property type="entry name" value="SBP_bac_5"/>
    <property type="match status" value="1"/>
</dbReference>
<dbReference type="PIRSF" id="PIRSF002741">
    <property type="entry name" value="MppA"/>
    <property type="match status" value="1"/>
</dbReference>
<dbReference type="SUPFAM" id="SSF53850">
    <property type="entry name" value="Periplasmic binding protein-like II"/>
    <property type="match status" value="1"/>
</dbReference>
<proteinExistence type="inferred from homology"/>